<feature type="peptide" id="PRO_0000440926" description="Peptide PGLa-R1" evidence="2">
    <location>
        <begin position="1"/>
        <end position="22"/>
    </location>
</feature>
<feature type="modified residue" description="Leucine amide" evidence="2">
    <location>
        <position position="22"/>
    </location>
</feature>
<name>PGLR1_XENRU</name>
<protein>
    <recommendedName>
        <fullName evidence="3">Peptide PGLa-R1</fullName>
    </recommendedName>
</protein>
<proteinExistence type="evidence at protein level"/>
<comment type="function">
    <text evidence="1">Antimicrobial peptide.</text>
</comment>
<comment type="subcellular location">
    <subcellularLocation>
        <location evidence="2">Secreted</location>
    </subcellularLocation>
</comment>
<comment type="tissue specificity">
    <text evidence="5">Expressed by the skin glands.</text>
</comment>
<comment type="mass spectrometry"/>
<comment type="similarity">
    <text evidence="4">Belongs to the gastrin/cholecystokinin family. Magainin subfamily.</text>
</comment>
<organism evidence="3">
    <name type="scientific">Xenopus ruwenzoriensis</name>
    <name type="common">Uganda clawed frog</name>
    <dbReference type="NCBI Taxonomy" id="105430"/>
    <lineage>
        <taxon>Eukaryota</taxon>
        <taxon>Metazoa</taxon>
        <taxon>Chordata</taxon>
        <taxon>Craniata</taxon>
        <taxon>Vertebrata</taxon>
        <taxon>Euteleostomi</taxon>
        <taxon>Amphibia</taxon>
        <taxon>Batrachia</taxon>
        <taxon>Anura</taxon>
        <taxon>Pipoidea</taxon>
        <taxon>Pipidae</taxon>
        <taxon>Xenopodinae</taxon>
        <taxon>Xenopus</taxon>
        <taxon>Xenopus</taxon>
    </lineage>
</organism>
<sequence>GMASKAGSVLGKVAKVALKAAL</sequence>
<accession>C0HKN9</accession>
<keyword id="KW-0027">Amidation</keyword>
<keyword id="KW-0878">Amphibian defense peptide</keyword>
<keyword id="KW-0929">Antimicrobial</keyword>
<keyword id="KW-0903">Direct protein sequencing</keyword>
<keyword id="KW-0964">Secreted</keyword>
<reference evidence="4" key="1">
    <citation type="journal article" date="2016" name="Comp. Biochem. Physiol.">
        <title>Peptidomic analysis of the extensive array of host-defense peptides in skin secretions of the dodecaploid frog Xenopus ruwenzoriensis (Pipidae).</title>
        <authorList>
            <person name="Coquet L."/>
            <person name="Kolodziejek J."/>
            <person name="Jouenne T."/>
            <person name="Nowotny N."/>
            <person name="King J.D."/>
            <person name="Conlon J.M."/>
        </authorList>
    </citation>
    <scope>PROTEIN SEQUENCE</scope>
    <scope>SUBCELLULAR LOCATION</scope>
    <scope>MASS SPECTROMETRY</scope>
    <scope>AMIDATION AT LEU-22</scope>
    <source>
        <tissue evidence="3">Skin secretion</tissue>
    </source>
</reference>
<dbReference type="GO" id="GO:0005576">
    <property type="term" value="C:extracellular region"/>
    <property type="evidence" value="ECO:0007669"/>
    <property type="project" value="UniProtKB-SubCell"/>
</dbReference>
<dbReference type="GO" id="GO:0006952">
    <property type="term" value="P:defense response"/>
    <property type="evidence" value="ECO:0007669"/>
    <property type="project" value="UniProtKB-KW"/>
</dbReference>
<evidence type="ECO:0000250" key="1">
    <source>
        <dbReference type="UniProtKB" id="C0HK87"/>
    </source>
</evidence>
<evidence type="ECO:0000269" key="2">
    <source>
    </source>
</evidence>
<evidence type="ECO:0000303" key="3">
    <source>
    </source>
</evidence>
<evidence type="ECO:0000305" key="4"/>
<evidence type="ECO:0000305" key="5">
    <source>
    </source>
</evidence>